<protein>
    <recommendedName>
        <fullName evidence="1">4-hydroxy-3-methylbut-2-en-1-yl diphosphate synthase (flavodoxin)</fullName>
        <ecNumber evidence="1">1.17.7.3</ecNumber>
    </recommendedName>
    <alternativeName>
        <fullName evidence="1">1-hydroxy-2-methyl-2-(E)-butenyl 4-diphosphate synthase</fullName>
    </alternativeName>
</protein>
<dbReference type="EC" id="1.17.7.3" evidence="1"/>
<dbReference type="EMBL" id="CP000481">
    <property type="protein sequence ID" value="ABK53294.1"/>
    <property type="molecule type" value="Genomic_DNA"/>
</dbReference>
<dbReference type="RefSeq" id="WP_011720357.1">
    <property type="nucleotide sequence ID" value="NC_008578.1"/>
</dbReference>
<dbReference type="SMR" id="A0LV34"/>
<dbReference type="FunCoup" id="A0LV34">
    <property type="interactions" value="38"/>
</dbReference>
<dbReference type="STRING" id="351607.Acel_1522"/>
<dbReference type="KEGG" id="ace:Acel_1522"/>
<dbReference type="eggNOG" id="COG0821">
    <property type="taxonomic scope" value="Bacteria"/>
</dbReference>
<dbReference type="HOGENOM" id="CLU_042258_0_0_11"/>
<dbReference type="InParanoid" id="A0LV34"/>
<dbReference type="OrthoDB" id="9803214at2"/>
<dbReference type="UniPathway" id="UPA00056">
    <property type="reaction ID" value="UER00096"/>
</dbReference>
<dbReference type="Proteomes" id="UP000008221">
    <property type="component" value="Chromosome"/>
</dbReference>
<dbReference type="GO" id="GO:0051539">
    <property type="term" value="F:4 iron, 4 sulfur cluster binding"/>
    <property type="evidence" value="ECO:0007669"/>
    <property type="project" value="UniProtKB-UniRule"/>
</dbReference>
<dbReference type="GO" id="GO:0046429">
    <property type="term" value="F:4-hydroxy-3-methylbut-2-en-1-yl diphosphate synthase activity (ferredoxin)"/>
    <property type="evidence" value="ECO:0007669"/>
    <property type="project" value="UniProtKB-UniRule"/>
</dbReference>
<dbReference type="GO" id="GO:0141197">
    <property type="term" value="F:4-hydroxy-3-methylbut-2-enyl-diphosphate synthase activity (flavodoxin)"/>
    <property type="evidence" value="ECO:0007669"/>
    <property type="project" value="UniProtKB-EC"/>
</dbReference>
<dbReference type="GO" id="GO:0005506">
    <property type="term" value="F:iron ion binding"/>
    <property type="evidence" value="ECO:0007669"/>
    <property type="project" value="InterPro"/>
</dbReference>
<dbReference type="GO" id="GO:0019288">
    <property type="term" value="P:isopentenyl diphosphate biosynthetic process, methylerythritol 4-phosphate pathway"/>
    <property type="evidence" value="ECO:0007669"/>
    <property type="project" value="UniProtKB-UniRule"/>
</dbReference>
<dbReference type="GO" id="GO:0016114">
    <property type="term" value="P:terpenoid biosynthetic process"/>
    <property type="evidence" value="ECO:0007669"/>
    <property type="project" value="InterPro"/>
</dbReference>
<dbReference type="FunFam" id="3.20.20.20:FF:000001">
    <property type="entry name" value="4-hydroxy-3-methylbut-2-en-1-yl diphosphate synthase (flavodoxin)"/>
    <property type="match status" value="1"/>
</dbReference>
<dbReference type="Gene3D" id="3.20.20.20">
    <property type="entry name" value="Dihydropteroate synthase-like"/>
    <property type="match status" value="1"/>
</dbReference>
<dbReference type="Gene3D" id="3.30.413.10">
    <property type="entry name" value="Sulfite Reductase Hemoprotein, domain 1"/>
    <property type="match status" value="1"/>
</dbReference>
<dbReference type="HAMAP" id="MF_00159">
    <property type="entry name" value="IspG"/>
    <property type="match status" value="1"/>
</dbReference>
<dbReference type="InterPro" id="IPR011005">
    <property type="entry name" value="Dihydropteroate_synth-like_sf"/>
</dbReference>
<dbReference type="InterPro" id="IPR016425">
    <property type="entry name" value="IspG_bac"/>
</dbReference>
<dbReference type="InterPro" id="IPR004588">
    <property type="entry name" value="IspG_bac-typ"/>
</dbReference>
<dbReference type="InterPro" id="IPR045854">
    <property type="entry name" value="NO2/SO3_Rdtase_4Fe4S_sf"/>
</dbReference>
<dbReference type="NCBIfam" id="TIGR00612">
    <property type="entry name" value="ispG_gcpE"/>
    <property type="match status" value="1"/>
</dbReference>
<dbReference type="NCBIfam" id="NF001540">
    <property type="entry name" value="PRK00366.1"/>
    <property type="match status" value="1"/>
</dbReference>
<dbReference type="PANTHER" id="PTHR30454">
    <property type="entry name" value="4-HYDROXY-3-METHYLBUT-2-EN-1-YL DIPHOSPHATE SYNTHASE"/>
    <property type="match status" value="1"/>
</dbReference>
<dbReference type="PANTHER" id="PTHR30454:SF0">
    <property type="entry name" value="4-HYDROXY-3-METHYLBUT-2-EN-1-YL DIPHOSPHATE SYNTHASE (FERREDOXIN), CHLOROPLASTIC"/>
    <property type="match status" value="1"/>
</dbReference>
<dbReference type="Pfam" id="PF04551">
    <property type="entry name" value="GcpE"/>
    <property type="match status" value="1"/>
</dbReference>
<dbReference type="PIRSF" id="PIRSF004640">
    <property type="entry name" value="IspG"/>
    <property type="match status" value="1"/>
</dbReference>
<dbReference type="SUPFAM" id="SSF51717">
    <property type="entry name" value="Dihydropteroate synthetase-like"/>
    <property type="match status" value="1"/>
</dbReference>
<dbReference type="SUPFAM" id="SSF56014">
    <property type="entry name" value="Nitrite and sulphite reductase 4Fe-4S domain-like"/>
    <property type="match status" value="1"/>
</dbReference>
<keyword id="KW-0004">4Fe-4S</keyword>
<keyword id="KW-0408">Iron</keyword>
<keyword id="KW-0411">Iron-sulfur</keyword>
<keyword id="KW-0414">Isoprene biosynthesis</keyword>
<keyword id="KW-0479">Metal-binding</keyword>
<keyword id="KW-0560">Oxidoreductase</keyword>
<keyword id="KW-1185">Reference proteome</keyword>
<feature type="chain" id="PRO_1000011432" description="4-hydroxy-3-methylbut-2-en-1-yl diphosphate synthase (flavodoxin)">
    <location>
        <begin position="1"/>
        <end position="391"/>
    </location>
</feature>
<feature type="binding site" evidence="1">
    <location>
        <position position="282"/>
    </location>
    <ligand>
        <name>[4Fe-4S] cluster</name>
        <dbReference type="ChEBI" id="CHEBI:49883"/>
    </ligand>
</feature>
<feature type="binding site" evidence="1">
    <location>
        <position position="285"/>
    </location>
    <ligand>
        <name>[4Fe-4S] cluster</name>
        <dbReference type="ChEBI" id="CHEBI:49883"/>
    </ligand>
</feature>
<feature type="binding site" evidence="1">
    <location>
        <position position="317"/>
    </location>
    <ligand>
        <name>[4Fe-4S] cluster</name>
        <dbReference type="ChEBI" id="CHEBI:49883"/>
    </ligand>
</feature>
<feature type="binding site" evidence="1">
    <location>
        <position position="324"/>
    </location>
    <ligand>
        <name>[4Fe-4S] cluster</name>
        <dbReference type="ChEBI" id="CHEBI:49883"/>
    </ligand>
</feature>
<comment type="function">
    <text evidence="1">Converts 2C-methyl-D-erythritol 2,4-cyclodiphosphate (ME-2,4cPP) into 1-hydroxy-2-methyl-2-(E)-butenyl 4-diphosphate.</text>
</comment>
<comment type="catalytic activity">
    <reaction evidence="1">
        <text>(2E)-4-hydroxy-3-methylbut-2-enyl diphosphate + oxidized [flavodoxin] + H2O + 2 H(+) = 2-C-methyl-D-erythritol 2,4-cyclic diphosphate + reduced [flavodoxin]</text>
        <dbReference type="Rhea" id="RHEA:43604"/>
        <dbReference type="Rhea" id="RHEA-COMP:10622"/>
        <dbReference type="Rhea" id="RHEA-COMP:10623"/>
        <dbReference type="ChEBI" id="CHEBI:15377"/>
        <dbReference type="ChEBI" id="CHEBI:15378"/>
        <dbReference type="ChEBI" id="CHEBI:57618"/>
        <dbReference type="ChEBI" id="CHEBI:58210"/>
        <dbReference type="ChEBI" id="CHEBI:58483"/>
        <dbReference type="ChEBI" id="CHEBI:128753"/>
        <dbReference type="EC" id="1.17.7.3"/>
    </reaction>
</comment>
<comment type="cofactor">
    <cofactor evidence="1">
        <name>[4Fe-4S] cluster</name>
        <dbReference type="ChEBI" id="CHEBI:49883"/>
    </cofactor>
    <text evidence="1">Binds 1 [4Fe-4S] cluster.</text>
</comment>
<comment type="pathway">
    <text evidence="1">Isoprenoid biosynthesis; isopentenyl diphosphate biosynthesis via DXP pathway; isopentenyl diphosphate from 1-deoxy-D-xylulose 5-phosphate: step 5/6.</text>
</comment>
<comment type="similarity">
    <text evidence="1">Belongs to the IspG family.</text>
</comment>
<name>ISPG_ACIC1</name>
<gene>
    <name evidence="1" type="primary">ispG</name>
    <name type="ordered locus">Acel_1522</name>
</gene>
<proteinExistence type="inferred from homology"/>
<organism>
    <name type="scientific">Acidothermus cellulolyticus (strain ATCC 43068 / DSM 8971 / 11B)</name>
    <dbReference type="NCBI Taxonomy" id="351607"/>
    <lineage>
        <taxon>Bacteria</taxon>
        <taxon>Bacillati</taxon>
        <taxon>Actinomycetota</taxon>
        <taxon>Actinomycetes</taxon>
        <taxon>Acidothermales</taxon>
        <taxon>Acidothermaceae</taxon>
        <taxon>Acidothermus</taxon>
    </lineage>
</organism>
<sequence>MTTINLGVPEVPAKSPLAPRRKSRQINVGGVLVGGGAPISVQSMTTTLTADVNATLQQIAELTAAGCDIVRVACPSQDDADALPIIAKKSPIPVIADIHFQPKYVFAAIEAGCAGVRVNPGNIKKFDDKVKEIAQAAKDHGTPIRIGVNAGSLDPRILQKYGKPTAEALVESALWEASLFEEHDFHDIKISVKHHDPMVMVQAYRLLAAQTDYPLHLGVTEAGPLLQGTIKSAVAFGILLSEGIGDTIRVSLSAPPVEEVKVGIGILESLGLRPRKLDIVSCPSCGRAQVDVYKLAEEVQAGLQGFPFPLRVAVMGCVVNGPGEAREADLGVASGNGKGQIFVRGEVIKTVPESQIVETLLEEAMRLAEEMQASGAFGDDQAVGAPIVTVQ</sequence>
<evidence type="ECO:0000255" key="1">
    <source>
        <dbReference type="HAMAP-Rule" id="MF_00159"/>
    </source>
</evidence>
<reference key="1">
    <citation type="journal article" date="2009" name="Genome Res.">
        <title>Complete genome of the cellulolytic thermophile Acidothermus cellulolyticus 11B provides insights into its ecophysiological and evolutionary adaptations.</title>
        <authorList>
            <person name="Barabote R.D."/>
            <person name="Xie G."/>
            <person name="Leu D.H."/>
            <person name="Normand P."/>
            <person name="Necsulea A."/>
            <person name="Daubin V."/>
            <person name="Medigue C."/>
            <person name="Adney W.S."/>
            <person name="Xu X.C."/>
            <person name="Lapidus A."/>
            <person name="Parales R.E."/>
            <person name="Detter C."/>
            <person name="Pujic P."/>
            <person name="Bruce D."/>
            <person name="Lavire C."/>
            <person name="Challacombe J.F."/>
            <person name="Brettin T.S."/>
            <person name="Berry A.M."/>
        </authorList>
    </citation>
    <scope>NUCLEOTIDE SEQUENCE [LARGE SCALE GENOMIC DNA]</scope>
    <source>
        <strain>ATCC 43068 / DSM 8971 / 11B</strain>
    </source>
</reference>
<accession>A0LV34</accession>